<name>ESAB_STAAN</name>
<evidence type="ECO:0000250" key="1">
    <source>
        <dbReference type="UniProtKB" id="P0C050"/>
    </source>
</evidence>
<evidence type="ECO:0000305" key="2"/>
<dbReference type="EMBL" id="BA000018">
    <property type="protein sequence ID" value="BAB41498.1"/>
    <property type="molecule type" value="Genomic_DNA"/>
</dbReference>
<dbReference type="PIR" id="G89792">
    <property type="entry name" value="G89792"/>
</dbReference>
<dbReference type="RefSeq" id="WP_001071606.1">
    <property type="nucleotide sequence ID" value="NC_002745.2"/>
</dbReference>
<dbReference type="SMR" id="Q7A7S1"/>
<dbReference type="EnsemblBacteria" id="BAB41498">
    <property type="protein sequence ID" value="BAB41498"/>
    <property type="gene ID" value="BAB41498"/>
</dbReference>
<dbReference type="GeneID" id="98344609"/>
<dbReference type="KEGG" id="sau:SA0274"/>
<dbReference type="HOGENOM" id="CLU_189011_2_0_9"/>
<dbReference type="GO" id="GO:0005737">
    <property type="term" value="C:cytoplasm"/>
    <property type="evidence" value="ECO:0007669"/>
    <property type="project" value="UniProtKB-SubCell"/>
</dbReference>
<dbReference type="Gene3D" id="3.10.20.90">
    <property type="entry name" value="Phosphatidylinositol 3-kinase Catalytic Subunit, Chain A, domain 1"/>
    <property type="match status" value="1"/>
</dbReference>
<dbReference type="InterPro" id="IPR014921">
    <property type="entry name" value="EsaB"/>
</dbReference>
<dbReference type="InterPro" id="IPR029071">
    <property type="entry name" value="Ubiquitin-like_domsf"/>
</dbReference>
<dbReference type="InterPro" id="IPR024962">
    <property type="entry name" value="YukD-like"/>
</dbReference>
<dbReference type="Pfam" id="PF08817">
    <property type="entry name" value="YukD"/>
    <property type="match status" value="1"/>
</dbReference>
<dbReference type="PIRSF" id="PIRSF037793">
    <property type="entry name" value="DUF_ubiquitin-like_YukD"/>
    <property type="match status" value="1"/>
</dbReference>
<dbReference type="SUPFAM" id="SSF54236">
    <property type="entry name" value="Ubiquitin-like"/>
    <property type="match status" value="1"/>
</dbReference>
<reference key="1">
    <citation type="journal article" date="2001" name="Lancet">
        <title>Whole genome sequencing of meticillin-resistant Staphylococcus aureus.</title>
        <authorList>
            <person name="Kuroda M."/>
            <person name="Ohta T."/>
            <person name="Uchiyama I."/>
            <person name="Baba T."/>
            <person name="Yuzawa H."/>
            <person name="Kobayashi I."/>
            <person name="Cui L."/>
            <person name="Oguchi A."/>
            <person name="Aoki K."/>
            <person name="Nagai Y."/>
            <person name="Lian J.-Q."/>
            <person name="Ito T."/>
            <person name="Kanamori M."/>
            <person name="Matsumaru H."/>
            <person name="Maruyama A."/>
            <person name="Murakami H."/>
            <person name="Hosoyama A."/>
            <person name="Mizutani-Ui Y."/>
            <person name="Takahashi N.K."/>
            <person name="Sawano T."/>
            <person name="Inoue R."/>
            <person name="Kaito C."/>
            <person name="Sekimizu K."/>
            <person name="Hirakawa H."/>
            <person name="Kuhara S."/>
            <person name="Goto S."/>
            <person name="Yabuzaki J."/>
            <person name="Kanehisa M."/>
            <person name="Yamashita A."/>
            <person name="Oshima K."/>
            <person name="Furuya K."/>
            <person name="Yoshino C."/>
            <person name="Shiba T."/>
            <person name="Hattori M."/>
            <person name="Ogasawara N."/>
            <person name="Hayashi H."/>
            <person name="Hiramatsu K."/>
        </authorList>
    </citation>
    <scope>NUCLEOTIDE SEQUENCE [LARGE SCALE GENOMIC DNA]</scope>
    <source>
        <strain>N315</strain>
    </source>
</reference>
<sequence length="80" mass="9121">MNQHVKVTFDFTNYNYGTYDLAVPAYLPIKNLIALVLDSLDISIFDVNTQIKVMTKGQLLVENDRLIDYQIADGDILKLL</sequence>
<feature type="chain" id="PRO_0000087045" description="Type VII secretion system accessory factor EsaB">
    <location>
        <begin position="1"/>
        <end position="80"/>
    </location>
</feature>
<accession>Q7A7S1</accession>
<protein>
    <recommendedName>
        <fullName evidence="1">Type VII secretion system accessory factor EsaB</fullName>
    </recommendedName>
</protein>
<organism>
    <name type="scientific">Staphylococcus aureus (strain N315)</name>
    <dbReference type="NCBI Taxonomy" id="158879"/>
    <lineage>
        <taxon>Bacteria</taxon>
        <taxon>Bacillati</taxon>
        <taxon>Bacillota</taxon>
        <taxon>Bacilli</taxon>
        <taxon>Bacillales</taxon>
        <taxon>Staphylococcaceae</taxon>
        <taxon>Staphylococcus</taxon>
    </lineage>
</organism>
<comment type="function">
    <text evidence="1">Seems to regulate secreted factors that contribute to the establishment of persistent infections in the host.</text>
</comment>
<comment type="subcellular location">
    <subcellularLocation>
        <location evidence="1">Cytoplasm</location>
    </subcellularLocation>
</comment>
<comment type="similarity">
    <text evidence="2">Belongs to the EsaB family.</text>
</comment>
<proteinExistence type="inferred from homology"/>
<gene>
    <name evidence="1" type="primary">esaB</name>
    <name type="ordered locus">SA0274</name>
</gene>
<keyword id="KW-0963">Cytoplasm</keyword>
<keyword id="KW-0843">Virulence</keyword>